<protein>
    <recommendedName>
        <fullName evidence="2">Small ribosomal subunit protein uS12</fullName>
    </recommendedName>
    <alternativeName>
        <fullName evidence="4">30S ribosomal protein S12</fullName>
    </alternativeName>
</protein>
<comment type="function">
    <text evidence="2">With S4 and S5 plays an important role in translational accuracy.</text>
</comment>
<comment type="function">
    <text evidence="2">Interacts with and stabilizes bases of the 16S rRNA that are involved in tRNA selection in the A site and with the mRNA backbone. Located at the interface of the 30S and 50S subunits, it traverses the body of the 30S subunit contacting proteins on the other side and probably holding the rRNA structure together. The combined cluster of proteins S8, S12 and S17 appears to hold together the shoulder and platform of the 30S subunit.</text>
</comment>
<comment type="subunit">
    <text evidence="2">Part of the 30S ribosomal subunit. Contacts proteins S8 and S17. May interact with IF1 in the 30S initiation complex.</text>
</comment>
<comment type="similarity">
    <text evidence="2">Belongs to the universal ribosomal protein uS12 family.</text>
</comment>
<reference key="1">
    <citation type="journal article" date="2015" name="Proc. Natl. Acad. Sci. U.S.A.">
        <title>Trichodesmium genome maintains abundant, widespread noncoding DNA in situ, despite oligotrophic lifestyle.</title>
        <authorList>
            <person name="Walworth N."/>
            <person name="Pfreundt U."/>
            <person name="Nelson W.C."/>
            <person name="Mincer T."/>
            <person name="Heidelberg J.F."/>
            <person name="Fu F."/>
            <person name="Waterbury J.B."/>
            <person name="Glavina del Rio T."/>
            <person name="Goodwin L."/>
            <person name="Kyrpides N.C."/>
            <person name="Land M.L."/>
            <person name="Woyke T."/>
            <person name="Hutchins D.A."/>
            <person name="Hess W.R."/>
            <person name="Webb E.A."/>
        </authorList>
    </citation>
    <scope>NUCLEOTIDE SEQUENCE [LARGE SCALE GENOMIC DNA]</scope>
    <source>
        <strain>IMS101</strain>
    </source>
</reference>
<proteinExistence type="inferred from homology"/>
<feature type="chain" id="PRO_0000263601" description="Small ribosomal subunit protein uS12">
    <location>
        <begin position="1"/>
        <end position="124"/>
    </location>
</feature>
<feature type="region of interest" description="Disordered" evidence="3">
    <location>
        <begin position="8"/>
        <end position="30"/>
    </location>
</feature>
<feature type="region of interest" description="Disordered" evidence="3">
    <location>
        <begin position="103"/>
        <end position="124"/>
    </location>
</feature>
<feature type="compositionally biased region" description="Basic residues" evidence="3">
    <location>
        <begin position="113"/>
        <end position="124"/>
    </location>
</feature>
<feature type="modified residue" description="3-methylthioaspartic acid" evidence="1">
    <location>
        <position position="89"/>
    </location>
</feature>
<accession>Q118Z5</accession>
<name>RS12_TRIEI</name>
<gene>
    <name evidence="2" type="primary">rpsL</name>
    <name evidence="2" type="synonym">rps12</name>
    <name type="ordered locus">Tery_0473</name>
</gene>
<evidence type="ECO:0000250" key="1"/>
<evidence type="ECO:0000255" key="2">
    <source>
        <dbReference type="HAMAP-Rule" id="MF_00403"/>
    </source>
</evidence>
<evidence type="ECO:0000256" key="3">
    <source>
        <dbReference type="SAM" id="MobiDB-lite"/>
    </source>
</evidence>
<evidence type="ECO:0000305" key="4"/>
<organism>
    <name type="scientific">Trichodesmium erythraeum (strain IMS101)</name>
    <dbReference type="NCBI Taxonomy" id="203124"/>
    <lineage>
        <taxon>Bacteria</taxon>
        <taxon>Bacillati</taxon>
        <taxon>Cyanobacteriota</taxon>
        <taxon>Cyanophyceae</taxon>
        <taxon>Oscillatoriophycideae</taxon>
        <taxon>Oscillatoriales</taxon>
        <taxon>Microcoleaceae</taxon>
        <taxon>Trichodesmium</taxon>
    </lineage>
</organism>
<sequence>MPTIQQLIRSARQDTEKQTKSPALKSCPQRRGVCTRVYTTTPKKPNSALRKVARVRLTSGFEVTAYIPGIGHNLQEHSVVMIRGGRVKDLPGVRYHIIRGTLDTAGVKDRKQSRSKYGAKKPKA</sequence>
<dbReference type="EMBL" id="CP000393">
    <property type="protein sequence ID" value="ABG49929.1"/>
    <property type="molecule type" value="Genomic_DNA"/>
</dbReference>
<dbReference type="RefSeq" id="WP_011610324.1">
    <property type="nucleotide sequence ID" value="NC_008312.1"/>
</dbReference>
<dbReference type="SMR" id="Q118Z5"/>
<dbReference type="STRING" id="203124.Tery_0473"/>
<dbReference type="KEGG" id="ter:Tery_0473"/>
<dbReference type="eggNOG" id="COG0048">
    <property type="taxonomic scope" value="Bacteria"/>
</dbReference>
<dbReference type="HOGENOM" id="CLU_104295_1_2_3"/>
<dbReference type="OrthoDB" id="9802366at2"/>
<dbReference type="GO" id="GO:0015935">
    <property type="term" value="C:small ribosomal subunit"/>
    <property type="evidence" value="ECO:0007669"/>
    <property type="project" value="InterPro"/>
</dbReference>
<dbReference type="GO" id="GO:0019843">
    <property type="term" value="F:rRNA binding"/>
    <property type="evidence" value="ECO:0007669"/>
    <property type="project" value="UniProtKB-UniRule"/>
</dbReference>
<dbReference type="GO" id="GO:0003735">
    <property type="term" value="F:structural constituent of ribosome"/>
    <property type="evidence" value="ECO:0007669"/>
    <property type="project" value="InterPro"/>
</dbReference>
<dbReference type="GO" id="GO:0000049">
    <property type="term" value="F:tRNA binding"/>
    <property type="evidence" value="ECO:0007669"/>
    <property type="project" value="UniProtKB-UniRule"/>
</dbReference>
<dbReference type="GO" id="GO:0006412">
    <property type="term" value="P:translation"/>
    <property type="evidence" value="ECO:0007669"/>
    <property type="project" value="UniProtKB-UniRule"/>
</dbReference>
<dbReference type="CDD" id="cd03368">
    <property type="entry name" value="Ribosomal_S12"/>
    <property type="match status" value="1"/>
</dbReference>
<dbReference type="FunFam" id="2.40.50.140:FF:000001">
    <property type="entry name" value="30S ribosomal protein S12"/>
    <property type="match status" value="1"/>
</dbReference>
<dbReference type="Gene3D" id="2.40.50.140">
    <property type="entry name" value="Nucleic acid-binding proteins"/>
    <property type="match status" value="1"/>
</dbReference>
<dbReference type="HAMAP" id="MF_00403_B">
    <property type="entry name" value="Ribosomal_uS12_B"/>
    <property type="match status" value="1"/>
</dbReference>
<dbReference type="InterPro" id="IPR012340">
    <property type="entry name" value="NA-bd_OB-fold"/>
</dbReference>
<dbReference type="InterPro" id="IPR006032">
    <property type="entry name" value="Ribosomal_uS12"/>
</dbReference>
<dbReference type="InterPro" id="IPR005679">
    <property type="entry name" value="Ribosomal_uS12_bac"/>
</dbReference>
<dbReference type="NCBIfam" id="TIGR00981">
    <property type="entry name" value="rpsL_bact"/>
    <property type="match status" value="1"/>
</dbReference>
<dbReference type="PANTHER" id="PTHR11652">
    <property type="entry name" value="30S RIBOSOMAL PROTEIN S12 FAMILY MEMBER"/>
    <property type="match status" value="1"/>
</dbReference>
<dbReference type="Pfam" id="PF00164">
    <property type="entry name" value="Ribosom_S12_S23"/>
    <property type="match status" value="1"/>
</dbReference>
<dbReference type="PIRSF" id="PIRSF002133">
    <property type="entry name" value="Ribosomal_S12/S23"/>
    <property type="match status" value="1"/>
</dbReference>
<dbReference type="PRINTS" id="PR01034">
    <property type="entry name" value="RIBOSOMALS12"/>
</dbReference>
<dbReference type="SUPFAM" id="SSF50249">
    <property type="entry name" value="Nucleic acid-binding proteins"/>
    <property type="match status" value="1"/>
</dbReference>
<dbReference type="PROSITE" id="PS00055">
    <property type="entry name" value="RIBOSOMAL_S12"/>
    <property type="match status" value="1"/>
</dbReference>
<keyword id="KW-0488">Methylation</keyword>
<keyword id="KW-0687">Ribonucleoprotein</keyword>
<keyword id="KW-0689">Ribosomal protein</keyword>
<keyword id="KW-0694">RNA-binding</keyword>
<keyword id="KW-0699">rRNA-binding</keyword>
<keyword id="KW-0820">tRNA-binding</keyword>